<evidence type="ECO:0000250" key="1">
    <source>
        <dbReference type="UniProtKB" id="P61960"/>
    </source>
</evidence>
<evidence type="ECO:0000305" key="2"/>
<comment type="function">
    <text evidence="1">Ubiquitin-like modifier which can be covalently attached via an isopeptide bond to lysine residues of substrate proteins as a monomer or a lysine-linked polymer. The so-called ufmylation, requires the UFM1-activating E1 enzyme UBA5, the UFM1-conjugating E2 enzyme UFC1, and the UFM1-ligase E3 enzyme UFL1. Ufmylation is involved in various processes, such as ribosome recycling, response to DNA damage, transcription or reticulophagy (also called ER-phagy) induced in response to endoplasmic reticulum stress.</text>
</comment>
<comment type="subunit">
    <text evidence="1">Interacts with UBA5. Interacts with UFC1.</text>
</comment>
<comment type="subcellular location">
    <subcellularLocation>
        <location evidence="1">Nucleus</location>
    </subcellularLocation>
    <subcellularLocation>
        <location evidence="1">Cytoplasm</location>
    </subcellularLocation>
</comment>
<comment type="PTM">
    <text evidence="1">UFM1 precursor is cleaved by UFSP1, promoting its maturation: processing of the C-terminal Ser-Cys dipeptide is required to expose its C-terminal conserved Gly residue.</text>
</comment>
<comment type="similarity">
    <text evidence="2">Belongs to the UFM1 family.</text>
</comment>
<gene>
    <name evidence="1" type="primary">UFM1</name>
</gene>
<organism>
    <name type="scientific">Columba livia</name>
    <name type="common">Rock dove</name>
    <dbReference type="NCBI Taxonomy" id="8932"/>
    <lineage>
        <taxon>Eukaryota</taxon>
        <taxon>Metazoa</taxon>
        <taxon>Chordata</taxon>
        <taxon>Craniata</taxon>
        <taxon>Vertebrata</taxon>
        <taxon>Euteleostomi</taxon>
        <taxon>Archelosauria</taxon>
        <taxon>Archosauria</taxon>
        <taxon>Dinosauria</taxon>
        <taxon>Saurischia</taxon>
        <taxon>Theropoda</taxon>
        <taxon>Coelurosauria</taxon>
        <taxon>Aves</taxon>
        <taxon>Neognathae</taxon>
        <taxon>Neoaves</taxon>
        <taxon>Columbimorphae</taxon>
        <taxon>Columbiformes</taxon>
        <taxon>Columbidae</taxon>
        <taxon>Columba</taxon>
    </lineage>
</organism>
<feature type="chain" id="PRO_0000391983" description="Ubiquitin-fold modifier 1">
    <location>
        <begin position="1"/>
        <end position="83"/>
    </location>
</feature>
<feature type="propeptide" id="PRO_0000391984" description="Removed in mature form" evidence="1">
    <location>
        <begin position="84"/>
        <end position="85"/>
    </location>
</feature>
<feature type="cross-link" description="Glycyl lysine isopeptide (Lys-Gly) (interchain with G-Cter in UFM1)" evidence="1">
    <location>
        <position position="69"/>
    </location>
</feature>
<feature type="cross-link" description="Glycyl lysine isopeptide (Gly-Lys) (interchain with K-? in acceptor proteins)" evidence="1">
    <location>
        <position position="83"/>
    </location>
</feature>
<keyword id="KW-0963">Cytoplasm</keyword>
<keyword id="KW-1017">Isopeptide bond</keyword>
<keyword id="KW-0539">Nucleus</keyword>
<keyword id="KW-0832">Ubl conjugation</keyword>
<keyword id="KW-0833">Ubl conjugation pathway</keyword>
<reference key="1">
    <citation type="submission" date="2008-07" db="EMBL/GenBank/DDBJ databases">
        <title>Construction of pituitary cDNA library and sequence analysis of ubiquitin-fold modifier 1 in laying and incubating pigeon.</title>
        <authorList>
            <person name="Gao P."/>
            <person name="Zhao H."/>
            <person name="Wang Q."/>
        </authorList>
    </citation>
    <scope>NUCLEOTIDE SEQUENCE [MRNA]</scope>
</reference>
<proteinExistence type="inferred from homology"/>
<protein>
    <recommendedName>
        <fullName evidence="1">Ubiquitin-fold modifier 1</fullName>
    </recommendedName>
</protein>
<accession>B5LVL2</accession>
<dbReference type="EMBL" id="EU914822">
    <property type="protein sequence ID" value="ACH47031.1"/>
    <property type="molecule type" value="mRNA"/>
</dbReference>
<dbReference type="RefSeq" id="XP_005501921.1">
    <property type="nucleotide sequence ID" value="XM_005501864.2"/>
</dbReference>
<dbReference type="SMR" id="B5LVL2"/>
<dbReference type="GeneID" id="102094349"/>
<dbReference type="KEGG" id="clv:102094349"/>
<dbReference type="CTD" id="51569"/>
<dbReference type="eggNOG" id="KOG3483">
    <property type="taxonomic scope" value="Eukaryota"/>
</dbReference>
<dbReference type="GO" id="GO:0005737">
    <property type="term" value="C:cytoplasm"/>
    <property type="evidence" value="ECO:0000250"/>
    <property type="project" value="UniProtKB"/>
</dbReference>
<dbReference type="GO" id="GO:0005634">
    <property type="term" value="C:nucleus"/>
    <property type="evidence" value="ECO:0000250"/>
    <property type="project" value="UniProtKB"/>
</dbReference>
<dbReference type="GO" id="GO:1990592">
    <property type="term" value="P:protein K69-linked ufmylation"/>
    <property type="evidence" value="ECO:0000250"/>
    <property type="project" value="UniProtKB"/>
</dbReference>
<dbReference type="GO" id="GO:0071569">
    <property type="term" value="P:protein ufmylation"/>
    <property type="evidence" value="ECO:0000250"/>
    <property type="project" value="UniProtKB"/>
</dbReference>
<dbReference type="GO" id="GO:0034976">
    <property type="term" value="P:response to endoplasmic reticulum stress"/>
    <property type="evidence" value="ECO:0000250"/>
    <property type="project" value="UniProtKB"/>
</dbReference>
<dbReference type="GO" id="GO:0061709">
    <property type="term" value="P:reticulophagy"/>
    <property type="evidence" value="ECO:0000250"/>
    <property type="project" value="UniProtKB"/>
</dbReference>
<dbReference type="CDD" id="cd01766">
    <property type="entry name" value="Ubl_UFM1"/>
    <property type="match status" value="1"/>
</dbReference>
<dbReference type="FunFam" id="3.10.20.90:FF:000044">
    <property type="entry name" value="Ubiquitin-fold modifier 1"/>
    <property type="match status" value="1"/>
</dbReference>
<dbReference type="Gene3D" id="3.10.20.90">
    <property type="entry name" value="Phosphatidylinositol 3-kinase Catalytic Subunit, Chain A, domain 1"/>
    <property type="match status" value="1"/>
</dbReference>
<dbReference type="InterPro" id="IPR029071">
    <property type="entry name" value="Ubiquitin-like_domsf"/>
</dbReference>
<dbReference type="InterPro" id="IPR005375">
    <property type="entry name" value="UFM1"/>
</dbReference>
<dbReference type="PANTHER" id="PTHR15825">
    <property type="entry name" value="UBIQUITIN-FOLD MODIFIER 1"/>
    <property type="match status" value="1"/>
</dbReference>
<dbReference type="PANTHER" id="PTHR15825:SF0">
    <property type="entry name" value="UBIQUITIN-FOLD MODIFIER 1"/>
    <property type="match status" value="1"/>
</dbReference>
<dbReference type="Pfam" id="PF03671">
    <property type="entry name" value="Ufm1"/>
    <property type="match status" value="1"/>
</dbReference>
<dbReference type="PIRSF" id="PIRSF038027">
    <property type="entry name" value="Ubiquitin-like_Ufm1"/>
    <property type="match status" value="1"/>
</dbReference>
<dbReference type="SUPFAM" id="SSF54236">
    <property type="entry name" value="Ubiquitin-like"/>
    <property type="match status" value="1"/>
</dbReference>
<sequence length="85" mass="9057">MSKVTFKVTLTSDPRLPYKVLSVPEGTPFTAVLKFAAEEFKVPAATSAIITNDGIGINPAQTAGNVFLKHGSDLRLIPRDRVGSS</sequence>
<name>UFM1_COLLI</name>